<evidence type="ECO:0000255" key="1">
    <source>
        <dbReference type="PROSITE-ProRule" id="PRU00169"/>
    </source>
</evidence>
<evidence type="ECO:0000255" key="2">
    <source>
        <dbReference type="PROSITE-ProRule" id="PRU00411"/>
    </source>
</evidence>
<evidence type="ECO:0000269" key="3">
    <source>
    </source>
</evidence>
<evidence type="ECO:0000269" key="4">
    <source>
    </source>
</evidence>
<evidence type="ECO:0000269" key="5">
    <source>
    </source>
</evidence>
<evidence type="ECO:0000305" key="6"/>
<evidence type="ECO:0007829" key="7">
    <source>
        <dbReference type="PDB" id="3EUL"/>
    </source>
</evidence>
<protein>
    <recommendedName>
        <fullName>Probable transcriptional regulatory protein NarL</fullName>
    </recommendedName>
</protein>
<organism>
    <name type="scientific">Mycobacterium tuberculosis (strain ATCC 25618 / H37Rv)</name>
    <dbReference type="NCBI Taxonomy" id="83332"/>
    <lineage>
        <taxon>Bacteria</taxon>
        <taxon>Bacillati</taxon>
        <taxon>Actinomycetota</taxon>
        <taxon>Actinomycetes</taxon>
        <taxon>Mycobacteriales</taxon>
        <taxon>Mycobacteriaceae</taxon>
        <taxon>Mycobacterium</taxon>
        <taxon>Mycobacterium tuberculosis complex</taxon>
    </lineage>
</organism>
<sequence>MSNPQPEKVRVVVGDDHPLFREGVVRALSLSGSVNVVGEADDGAAALELIKAHLPDVALLDYRMPGMDGAQVAAAVRSYELPTRVLLISAHDEPAIVYQALQQGAAGFLLKDSTRTEIVKAVLDCAKGRDVVAPSLVGGLAGEIRQRAAPVAPVLSAREREVLNRIACGQSIPAIAAELYVAPSTVKTHVQRLYEKLGVSDRAAAVAEAMRQRLLD</sequence>
<dbReference type="EMBL" id="AL123456">
    <property type="protein sequence ID" value="CCP43592.1"/>
    <property type="molecule type" value="Genomic_DNA"/>
</dbReference>
<dbReference type="PIR" id="D70813">
    <property type="entry name" value="D70813"/>
</dbReference>
<dbReference type="RefSeq" id="NP_215359.1">
    <property type="nucleotide sequence ID" value="NC_000962.3"/>
</dbReference>
<dbReference type="RefSeq" id="WP_003404388.1">
    <property type="nucleotide sequence ID" value="NZ_NVQJ01000040.1"/>
</dbReference>
<dbReference type="PDB" id="3EUL">
    <property type="method" value="X-ray"/>
    <property type="resolution" value="1.90 A"/>
    <property type="chains" value="A/B/C/D=1-145"/>
</dbReference>
<dbReference type="PDBsum" id="3EUL"/>
<dbReference type="SMR" id="P9WGM5"/>
<dbReference type="FunCoup" id="P9WGM5">
    <property type="interactions" value="68"/>
</dbReference>
<dbReference type="STRING" id="83332.Rv0844c"/>
<dbReference type="PaxDb" id="83332-Rv0844c"/>
<dbReference type="DNASU" id="885603"/>
<dbReference type="GeneID" id="45424810"/>
<dbReference type="GeneID" id="885603"/>
<dbReference type="KEGG" id="mtu:Rv0844c"/>
<dbReference type="KEGG" id="mtv:RVBD_0844c"/>
<dbReference type="TubercuList" id="Rv0844c"/>
<dbReference type="eggNOG" id="COG2197">
    <property type="taxonomic scope" value="Bacteria"/>
</dbReference>
<dbReference type="InParanoid" id="P9WGM5"/>
<dbReference type="OrthoDB" id="9808843at2"/>
<dbReference type="PhylomeDB" id="P9WGM5"/>
<dbReference type="EvolutionaryTrace" id="P9WGM5"/>
<dbReference type="PHI-base" id="PHI:3620"/>
<dbReference type="Proteomes" id="UP000001584">
    <property type="component" value="Chromosome"/>
</dbReference>
<dbReference type="GO" id="GO:0005737">
    <property type="term" value="C:cytoplasm"/>
    <property type="evidence" value="ECO:0007669"/>
    <property type="project" value="UniProtKB-SubCell"/>
</dbReference>
<dbReference type="GO" id="GO:0003677">
    <property type="term" value="F:DNA binding"/>
    <property type="evidence" value="ECO:0007669"/>
    <property type="project" value="UniProtKB-KW"/>
</dbReference>
<dbReference type="GO" id="GO:0000160">
    <property type="term" value="P:phosphorelay signal transduction system"/>
    <property type="evidence" value="ECO:0007669"/>
    <property type="project" value="UniProtKB-KW"/>
</dbReference>
<dbReference type="GO" id="GO:0006355">
    <property type="term" value="P:regulation of DNA-templated transcription"/>
    <property type="evidence" value="ECO:0007669"/>
    <property type="project" value="InterPro"/>
</dbReference>
<dbReference type="CDD" id="cd06170">
    <property type="entry name" value="LuxR_C_like"/>
    <property type="match status" value="1"/>
</dbReference>
<dbReference type="CDD" id="cd17535">
    <property type="entry name" value="REC_NarL-like"/>
    <property type="match status" value="1"/>
</dbReference>
<dbReference type="Gene3D" id="3.40.50.2300">
    <property type="match status" value="1"/>
</dbReference>
<dbReference type="InterPro" id="IPR011006">
    <property type="entry name" value="CheY-like_superfamily"/>
</dbReference>
<dbReference type="InterPro" id="IPR016032">
    <property type="entry name" value="Sig_transdc_resp-reg_C-effctor"/>
</dbReference>
<dbReference type="InterPro" id="IPR001789">
    <property type="entry name" value="Sig_transdc_resp-reg_receiver"/>
</dbReference>
<dbReference type="InterPro" id="IPR000792">
    <property type="entry name" value="Tscrpt_reg_LuxR_C"/>
</dbReference>
<dbReference type="InterPro" id="IPR039420">
    <property type="entry name" value="WalR-like"/>
</dbReference>
<dbReference type="PANTHER" id="PTHR43214:SF24">
    <property type="entry name" value="TRANSCRIPTIONAL REGULATORY PROTEIN NARL-RELATED"/>
    <property type="match status" value="1"/>
</dbReference>
<dbReference type="PANTHER" id="PTHR43214">
    <property type="entry name" value="TWO-COMPONENT RESPONSE REGULATOR"/>
    <property type="match status" value="1"/>
</dbReference>
<dbReference type="Pfam" id="PF00196">
    <property type="entry name" value="GerE"/>
    <property type="match status" value="1"/>
</dbReference>
<dbReference type="Pfam" id="PF00072">
    <property type="entry name" value="Response_reg"/>
    <property type="match status" value="1"/>
</dbReference>
<dbReference type="PRINTS" id="PR00038">
    <property type="entry name" value="HTHLUXR"/>
</dbReference>
<dbReference type="SMART" id="SM00421">
    <property type="entry name" value="HTH_LUXR"/>
    <property type="match status" value="1"/>
</dbReference>
<dbReference type="SMART" id="SM00448">
    <property type="entry name" value="REC"/>
    <property type="match status" value="1"/>
</dbReference>
<dbReference type="SUPFAM" id="SSF46894">
    <property type="entry name" value="C-terminal effector domain of the bipartite response regulators"/>
    <property type="match status" value="1"/>
</dbReference>
<dbReference type="SUPFAM" id="SSF52172">
    <property type="entry name" value="CheY-like"/>
    <property type="match status" value="1"/>
</dbReference>
<dbReference type="PROSITE" id="PS50043">
    <property type="entry name" value="HTH_LUXR_2"/>
    <property type="match status" value="1"/>
</dbReference>
<dbReference type="PROSITE" id="PS50110">
    <property type="entry name" value="RESPONSE_REGULATORY"/>
    <property type="match status" value="1"/>
</dbReference>
<gene>
    <name type="primary">narL</name>
    <name type="ordered locus">Rv0844c</name>
</gene>
<comment type="function">
    <text evidence="5">Member of the two-component regulatory system NarS/NarL that regulates genes involved in aerobic nitrate metabolism (PubMed:25659431). Upon phosphorylation by NarS, functions as a transcription regulator by direct binding to promoter regions of target genes together with DevR to regulate their expression during aerobic nitrate metabolism (PubMed:25659431).</text>
</comment>
<comment type="subunit">
    <text evidence="4 5">Monomer in solution (PubMed:19052358). Interacts with DevR (PubMed:25659431).</text>
</comment>
<comment type="subcellular location">
    <subcellularLocation>
        <location evidence="6">Cytoplasm</location>
    </subcellularLocation>
</comment>
<comment type="PTM">
    <text evidence="5">Phosphorylated by NarS.</text>
</comment>
<comment type="disruption phenotype">
    <text evidence="3">Mutants show no change in virulence in mouse model of infection.</text>
</comment>
<comment type="miscellaneous">
    <text>Was identified as a high-confidence drug target.</text>
</comment>
<feature type="chain" id="PRO_0000401134" description="Probable transcriptional regulatory protein NarL">
    <location>
        <begin position="1"/>
        <end position="216"/>
    </location>
</feature>
<feature type="domain" description="Response regulatory" evidence="1">
    <location>
        <begin position="10"/>
        <end position="126"/>
    </location>
</feature>
<feature type="domain" description="HTH luxR-type" evidence="2">
    <location>
        <begin position="148"/>
        <end position="213"/>
    </location>
</feature>
<feature type="DNA-binding region" description="H-T-H motif" evidence="2">
    <location>
        <begin position="172"/>
        <end position="191"/>
    </location>
</feature>
<feature type="modified residue" description="4-aspartylphosphate" evidence="1 5">
    <location>
        <position position="61"/>
    </location>
</feature>
<feature type="mutagenesis site" description="Complete loss of phosphorylation." evidence="5">
    <original>D</original>
    <variation>N</variation>
    <location>
        <position position="61"/>
    </location>
</feature>
<feature type="strand" evidence="7">
    <location>
        <begin position="9"/>
        <end position="14"/>
    </location>
</feature>
<feature type="helix" evidence="7">
    <location>
        <begin position="18"/>
        <end position="30"/>
    </location>
</feature>
<feature type="strand" evidence="7">
    <location>
        <begin position="32"/>
        <end position="42"/>
    </location>
</feature>
<feature type="helix" evidence="7">
    <location>
        <begin position="43"/>
        <end position="53"/>
    </location>
</feature>
<feature type="strand" evidence="7">
    <location>
        <begin position="56"/>
        <end position="61"/>
    </location>
</feature>
<feature type="strand" evidence="7">
    <location>
        <begin position="65"/>
        <end position="67"/>
    </location>
</feature>
<feature type="helix" evidence="7">
    <location>
        <begin position="69"/>
        <end position="78"/>
    </location>
</feature>
<feature type="strand" evidence="7">
    <location>
        <begin position="84"/>
        <end position="90"/>
    </location>
</feature>
<feature type="helix" evidence="7">
    <location>
        <begin position="94"/>
        <end position="102"/>
    </location>
</feature>
<feature type="strand" evidence="7">
    <location>
        <begin position="106"/>
        <end position="110"/>
    </location>
</feature>
<feature type="helix" evidence="7">
    <location>
        <begin position="115"/>
        <end position="127"/>
    </location>
</feature>
<accession>P9WGM5</accession>
<accession>L0T7W4</accession>
<accession>O53856</accession>
<accession>Q7D965</accession>
<keyword id="KW-0002">3D-structure</keyword>
<keyword id="KW-0963">Cytoplasm</keyword>
<keyword id="KW-0238">DNA-binding</keyword>
<keyword id="KW-0597">Phosphoprotein</keyword>
<keyword id="KW-1185">Reference proteome</keyword>
<keyword id="KW-0804">Transcription</keyword>
<keyword id="KW-0805">Transcription regulation</keyword>
<keyword id="KW-0902">Two-component regulatory system</keyword>
<proteinExistence type="evidence at protein level"/>
<reference key="1">
    <citation type="journal article" date="1998" name="Nature">
        <title>Deciphering the biology of Mycobacterium tuberculosis from the complete genome sequence.</title>
        <authorList>
            <person name="Cole S.T."/>
            <person name="Brosch R."/>
            <person name="Parkhill J."/>
            <person name="Garnier T."/>
            <person name="Churcher C.M."/>
            <person name="Harris D.E."/>
            <person name="Gordon S.V."/>
            <person name="Eiglmeier K."/>
            <person name="Gas S."/>
            <person name="Barry C.E. III"/>
            <person name="Tekaia F."/>
            <person name="Badcock K."/>
            <person name="Basham D."/>
            <person name="Brown D."/>
            <person name="Chillingworth T."/>
            <person name="Connor R."/>
            <person name="Davies R.M."/>
            <person name="Devlin K."/>
            <person name="Feltwell T."/>
            <person name="Gentles S."/>
            <person name="Hamlin N."/>
            <person name="Holroyd S."/>
            <person name="Hornsby T."/>
            <person name="Jagels K."/>
            <person name="Krogh A."/>
            <person name="McLean J."/>
            <person name="Moule S."/>
            <person name="Murphy L.D."/>
            <person name="Oliver S."/>
            <person name="Osborne J."/>
            <person name="Quail M.A."/>
            <person name="Rajandream M.A."/>
            <person name="Rogers J."/>
            <person name="Rutter S."/>
            <person name="Seeger K."/>
            <person name="Skelton S."/>
            <person name="Squares S."/>
            <person name="Squares R."/>
            <person name="Sulston J.E."/>
            <person name="Taylor K."/>
            <person name="Whitehead S."/>
            <person name="Barrell B.G."/>
        </authorList>
    </citation>
    <scope>NUCLEOTIDE SEQUENCE [LARGE SCALE GENOMIC DNA]</scope>
    <source>
        <strain>ATCC 25618 / H37Rv</strain>
    </source>
</reference>
<reference key="2">
    <citation type="journal article" date="2003" name="Infect. Immun.">
        <title>Deletion of two-component regulatory systems increases the virulence of Mycobacterium tuberculosis.</title>
        <authorList>
            <person name="Parish T."/>
            <person name="Smith D.A."/>
            <person name="Kendall S."/>
            <person name="Casali N."/>
            <person name="Bancroft G.J."/>
            <person name="Stoker N.G."/>
        </authorList>
    </citation>
    <scope>FUNCTION</scope>
    <scope>DISRUPTION PHENOTYPE</scope>
    <source>
        <strain>ATCC 25618 / H37Rv</strain>
    </source>
</reference>
<reference key="3">
    <citation type="journal article" date="2008" name="BMC Syst. Biol.">
        <title>targetTB: a target identification pipeline for Mycobacterium tuberculosis through an interactome, reactome and genome-scale structural analysis.</title>
        <authorList>
            <person name="Raman K."/>
            <person name="Yeturu K."/>
            <person name="Chandra N."/>
        </authorList>
    </citation>
    <scope>IDENTIFICATION AS A DRUG TARGET [LARGE SCALE ANALYSIS]</scope>
</reference>
<reference key="4">
    <citation type="journal article" date="2011" name="Mol. Cell. Proteomics">
        <title>Proteogenomic analysis of Mycobacterium tuberculosis by high resolution mass spectrometry.</title>
        <authorList>
            <person name="Kelkar D.S."/>
            <person name="Kumar D."/>
            <person name="Kumar P."/>
            <person name="Balakrishnan L."/>
            <person name="Muthusamy B."/>
            <person name="Yadav A.K."/>
            <person name="Shrivastava P."/>
            <person name="Marimuthu A."/>
            <person name="Anand S."/>
            <person name="Sundaram H."/>
            <person name="Kingsbury R."/>
            <person name="Harsha H.C."/>
            <person name="Nair B."/>
            <person name="Prasad T.S."/>
            <person name="Chauhan D.S."/>
            <person name="Katoch K."/>
            <person name="Katoch V.M."/>
            <person name="Kumar P."/>
            <person name="Chaerkady R."/>
            <person name="Ramachandran S."/>
            <person name="Dash D."/>
            <person name="Pandey A."/>
        </authorList>
    </citation>
    <scope>IDENTIFICATION BY MASS SPECTROMETRY [LARGE SCALE ANALYSIS]</scope>
    <source>
        <strain>ATCC 25618 / H37Rv</strain>
    </source>
</reference>
<reference key="5">
    <citation type="journal article" date="2015" name="J. Biol. Chem.">
        <title>Mycobacterium tuberculosis response regulators, DevR and NarL, interact in vivo and co-regulate gene expression during aerobic nitrate metabolism.</title>
        <authorList>
            <person name="Malhotra V."/>
            <person name="Agrawal R."/>
            <person name="Duncan T.R."/>
            <person name="Saini D.K."/>
            <person name="Clark-Curtiss J.E."/>
        </authorList>
    </citation>
    <scope>FUNCTION</scope>
    <scope>PHOSPHORYLATION AT ASP-61</scope>
    <scope>INTERACTION WITH DEVR</scope>
    <scope>MUTAGENESIS OF ASP-61</scope>
    <source>
        <strain>ATCC 25618 / H37Rv</strain>
    </source>
</reference>
<reference key="6">
    <citation type="journal article" date="2008" name="Acta Crystallogr. F">
        <title>1.9 A structure of the signal receiver domain of the putative response regulator NarL from Mycobacterium tuberculosis.</title>
        <authorList>
            <person name="Schnell R."/>
            <person name="Agren D."/>
            <person name="Schneider G."/>
        </authorList>
    </citation>
    <scope>X-RAY CRYSTALLOGRAPHY (1.9 ANGSTROMS) OF 1-145</scope>
    <scope>SUBUNIT</scope>
</reference>
<name>NARL_MYCTU</name>